<reference evidence="14" key="1">
    <citation type="journal article" date="2000" name="Science">
        <title>The genome sequence of Drosophila melanogaster.</title>
        <authorList>
            <person name="Adams M.D."/>
            <person name="Celniker S.E."/>
            <person name="Holt R.A."/>
            <person name="Evans C.A."/>
            <person name="Gocayne J.D."/>
            <person name="Amanatides P.G."/>
            <person name="Scherer S.E."/>
            <person name="Li P.W."/>
            <person name="Hoskins R.A."/>
            <person name="Galle R.F."/>
            <person name="George R.A."/>
            <person name="Lewis S.E."/>
            <person name="Richards S."/>
            <person name="Ashburner M."/>
            <person name="Henderson S.N."/>
            <person name="Sutton G.G."/>
            <person name="Wortman J.R."/>
            <person name="Yandell M.D."/>
            <person name="Zhang Q."/>
            <person name="Chen L.X."/>
            <person name="Brandon R.C."/>
            <person name="Rogers Y.-H.C."/>
            <person name="Blazej R.G."/>
            <person name="Champe M."/>
            <person name="Pfeiffer B.D."/>
            <person name="Wan K.H."/>
            <person name="Doyle C."/>
            <person name="Baxter E.G."/>
            <person name="Helt G."/>
            <person name="Nelson C.R."/>
            <person name="Miklos G.L.G."/>
            <person name="Abril J.F."/>
            <person name="Agbayani A."/>
            <person name="An H.-J."/>
            <person name="Andrews-Pfannkoch C."/>
            <person name="Baldwin D."/>
            <person name="Ballew R.M."/>
            <person name="Basu A."/>
            <person name="Baxendale J."/>
            <person name="Bayraktaroglu L."/>
            <person name="Beasley E.M."/>
            <person name="Beeson K.Y."/>
            <person name="Benos P.V."/>
            <person name="Berman B.P."/>
            <person name="Bhandari D."/>
            <person name="Bolshakov S."/>
            <person name="Borkova D."/>
            <person name="Botchan M.R."/>
            <person name="Bouck J."/>
            <person name="Brokstein P."/>
            <person name="Brottier P."/>
            <person name="Burtis K.C."/>
            <person name="Busam D.A."/>
            <person name="Butler H."/>
            <person name="Cadieu E."/>
            <person name="Center A."/>
            <person name="Chandra I."/>
            <person name="Cherry J.M."/>
            <person name="Cawley S."/>
            <person name="Dahlke C."/>
            <person name="Davenport L.B."/>
            <person name="Davies P."/>
            <person name="de Pablos B."/>
            <person name="Delcher A."/>
            <person name="Deng Z."/>
            <person name="Mays A.D."/>
            <person name="Dew I."/>
            <person name="Dietz S.M."/>
            <person name="Dodson K."/>
            <person name="Doup L.E."/>
            <person name="Downes M."/>
            <person name="Dugan-Rocha S."/>
            <person name="Dunkov B.C."/>
            <person name="Dunn P."/>
            <person name="Durbin K.J."/>
            <person name="Evangelista C.C."/>
            <person name="Ferraz C."/>
            <person name="Ferriera S."/>
            <person name="Fleischmann W."/>
            <person name="Fosler C."/>
            <person name="Gabrielian A.E."/>
            <person name="Garg N.S."/>
            <person name="Gelbart W.M."/>
            <person name="Glasser K."/>
            <person name="Glodek A."/>
            <person name="Gong F."/>
            <person name="Gorrell J.H."/>
            <person name="Gu Z."/>
            <person name="Guan P."/>
            <person name="Harris M."/>
            <person name="Harris N.L."/>
            <person name="Harvey D.A."/>
            <person name="Heiman T.J."/>
            <person name="Hernandez J.R."/>
            <person name="Houck J."/>
            <person name="Hostin D."/>
            <person name="Houston K.A."/>
            <person name="Howland T.J."/>
            <person name="Wei M.-H."/>
            <person name="Ibegwam C."/>
            <person name="Jalali M."/>
            <person name="Kalush F."/>
            <person name="Karpen G.H."/>
            <person name="Ke Z."/>
            <person name="Kennison J.A."/>
            <person name="Ketchum K.A."/>
            <person name="Kimmel B.E."/>
            <person name="Kodira C.D."/>
            <person name="Kraft C.L."/>
            <person name="Kravitz S."/>
            <person name="Kulp D."/>
            <person name="Lai Z."/>
            <person name="Lasko P."/>
            <person name="Lei Y."/>
            <person name="Levitsky A.A."/>
            <person name="Li J.H."/>
            <person name="Li Z."/>
            <person name="Liang Y."/>
            <person name="Lin X."/>
            <person name="Liu X."/>
            <person name="Mattei B."/>
            <person name="McIntosh T.C."/>
            <person name="McLeod M.P."/>
            <person name="McPherson D."/>
            <person name="Merkulov G."/>
            <person name="Milshina N.V."/>
            <person name="Mobarry C."/>
            <person name="Morris J."/>
            <person name="Moshrefi A."/>
            <person name="Mount S.M."/>
            <person name="Moy M."/>
            <person name="Murphy B."/>
            <person name="Murphy L."/>
            <person name="Muzny D.M."/>
            <person name="Nelson D.L."/>
            <person name="Nelson D.R."/>
            <person name="Nelson K.A."/>
            <person name="Nixon K."/>
            <person name="Nusskern D.R."/>
            <person name="Pacleb J.M."/>
            <person name="Palazzolo M."/>
            <person name="Pittman G.S."/>
            <person name="Pan S."/>
            <person name="Pollard J."/>
            <person name="Puri V."/>
            <person name="Reese M.G."/>
            <person name="Reinert K."/>
            <person name="Remington K."/>
            <person name="Saunders R.D.C."/>
            <person name="Scheeler F."/>
            <person name="Shen H."/>
            <person name="Shue B.C."/>
            <person name="Siden-Kiamos I."/>
            <person name="Simpson M."/>
            <person name="Skupski M.P."/>
            <person name="Smith T.J."/>
            <person name="Spier E."/>
            <person name="Spradling A.C."/>
            <person name="Stapleton M."/>
            <person name="Strong R."/>
            <person name="Sun E."/>
            <person name="Svirskas R."/>
            <person name="Tector C."/>
            <person name="Turner R."/>
            <person name="Venter E."/>
            <person name="Wang A.H."/>
            <person name="Wang X."/>
            <person name="Wang Z.-Y."/>
            <person name="Wassarman D.A."/>
            <person name="Weinstock G.M."/>
            <person name="Weissenbach J."/>
            <person name="Williams S.M."/>
            <person name="Woodage T."/>
            <person name="Worley K.C."/>
            <person name="Wu D."/>
            <person name="Yang S."/>
            <person name="Yao Q.A."/>
            <person name="Ye J."/>
            <person name="Yeh R.-F."/>
            <person name="Zaveri J.S."/>
            <person name="Zhan M."/>
            <person name="Zhang G."/>
            <person name="Zhao Q."/>
            <person name="Zheng L."/>
            <person name="Zheng X.H."/>
            <person name="Zhong F.N."/>
            <person name="Zhong W."/>
            <person name="Zhou X."/>
            <person name="Zhu S.C."/>
            <person name="Zhu X."/>
            <person name="Smith H.O."/>
            <person name="Gibbs R.A."/>
            <person name="Myers E.W."/>
            <person name="Rubin G.M."/>
            <person name="Venter J.C."/>
        </authorList>
    </citation>
    <scope>NUCLEOTIDE SEQUENCE [LARGE SCALE GENOMIC DNA]</scope>
    <source>
        <strain evidence="14">Berkeley</strain>
    </source>
</reference>
<reference evidence="14" key="2">
    <citation type="journal article" date="2002" name="Genome Biol.">
        <title>Annotation of the Drosophila melanogaster euchromatic genome: a systematic review.</title>
        <authorList>
            <person name="Misra S."/>
            <person name="Crosby M.A."/>
            <person name="Mungall C.J."/>
            <person name="Matthews B.B."/>
            <person name="Campbell K.S."/>
            <person name="Hradecky P."/>
            <person name="Huang Y."/>
            <person name="Kaminker J.S."/>
            <person name="Millburn G.H."/>
            <person name="Prochnik S.E."/>
            <person name="Smith C.D."/>
            <person name="Tupy J.L."/>
            <person name="Whitfield E.J."/>
            <person name="Bayraktaroglu L."/>
            <person name="Berman B.P."/>
            <person name="Bettencourt B.R."/>
            <person name="Celniker S.E."/>
            <person name="de Grey A.D.N.J."/>
            <person name="Drysdale R.A."/>
            <person name="Harris N.L."/>
            <person name="Richter J."/>
            <person name="Russo S."/>
            <person name="Schroeder A.J."/>
            <person name="Shu S.Q."/>
            <person name="Stapleton M."/>
            <person name="Yamada C."/>
            <person name="Ashburner M."/>
            <person name="Gelbart W.M."/>
            <person name="Rubin G.M."/>
            <person name="Lewis S.E."/>
        </authorList>
    </citation>
    <scope>GENOME REANNOTATION</scope>
    <source>
        <strain evidence="14">Berkeley</strain>
    </source>
</reference>
<reference evidence="10" key="3">
    <citation type="journal article" date="2005" name="J. Biol. Chem.">
        <title>DTL, the Drosophila homolog of PIMT/Tgs1 nuclear receptor coactivator-interacting protein/RNA methyltransferase, has an essential role in development.</title>
        <authorList>
            <person name="Komonyi O."/>
            <person name="Papai G."/>
            <person name="Enunlu I."/>
            <person name="Muratoglu S."/>
            <person name="Pankotai T."/>
            <person name="Kopitova D."/>
            <person name="Maroy P."/>
            <person name="Udvardy A."/>
            <person name="Boros I."/>
        </authorList>
    </citation>
    <scope>HOMODIMER</scope>
    <scope>DEVELOPMENTAL STAGE</scope>
    <scope>DISRUPTION PHENOTYPE</scope>
</reference>
<reference evidence="10" key="4">
    <citation type="journal article" date="2009" name="J. Cell Sci.">
        <title>A product of the bicistronic Drosophila melanogaster gene CG31241, which also encodes a trimethylguanosine synthase, plays a role in telomere protection.</title>
        <authorList>
            <person name="Komonyi O."/>
            <person name="Schauer T."/>
            <person name="Papai G."/>
            <person name="Deak P."/>
            <person name="Boros I.M."/>
        </authorList>
    </citation>
    <scope>FUNCTION</scope>
    <scope>SUBCELLULAR LOCATION</scope>
    <scope>DISRUPTION PHENOTYPE</scope>
</reference>
<reference evidence="10" key="5">
    <citation type="journal article" date="2009" name="Proc. Natl. Acad. Sci. U.S.A.">
        <title>The Drosophila modigliani (moi) gene encodes a HOAP-interacting protein required for telomere protection.</title>
        <authorList>
            <person name="Raffa G.D."/>
            <person name="Siriaco G."/>
            <person name="Cugusi S."/>
            <person name="Ciapponi L."/>
            <person name="Cenci G."/>
            <person name="Wojcik E."/>
            <person name="Gatti M."/>
        </authorList>
    </citation>
    <scope>INTERACTION WITH CAV AND SU(VAR)205</scope>
    <scope>SUBCELLULAR LOCATION</scope>
    <scope>DISRUPTION PHENOTYPE</scope>
</reference>
<reference evidence="10" key="6">
    <citation type="journal article" date="2010" name="Genes Dev.">
        <title>Verrocchio, a Drosophila OB fold-containing protein, is a component of the terminin telomere-capping complex.</title>
        <authorList>
            <person name="Raffa G.D."/>
            <person name="Raimondo D."/>
            <person name="Sorino C."/>
            <person name="Cugusi S."/>
            <person name="Cenci G."/>
            <person name="Cacchione S."/>
            <person name="Gatti M."/>
            <person name="Ciapponi L."/>
        </authorList>
    </citation>
    <scope>INTERACTION WITH VER</scope>
    <scope>SUBCELLULAR LOCATION</scope>
</reference>
<reference evidence="10" key="7">
    <citation type="journal article" date="2015" name="PLoS Genet.">
        <title>The Analysis of Pendolino (peo) Mutants Reveals Differences in the Fusigenic Potential among Drosophila Telomeres.</title>
        <authorList>
            <person name="Cenci G."/>
            <person name="Ciapponi L."/>
            <person name="Marzullo M."/>
            <person name="Raffa G.D."/>
            <person name="Morciano P."/>
            <person name="Raimondo D."/>
            <person name="Burla R."/>
            <person name="Saggio I."/>
            <person name="Gatti M."/>
        </authorList>
    </citation>
    <scope>INTERACTION WITH PEO</scope>
    <scope>SUBCELLULAR LOCATION</scope>
</reference>
<reference evidence="10" key="8">
    <citation type="journal article" date="2016" name="PLoS Genet.">
        <title>MTV, an ssDNA Protecting Complex Essential for Transposon-Based Telomere Maintenance in Drosophila.</title>
        <authorList>
            <person name="Zhang Y."/>
            <person name="Zhang L."/>
            <person name="Tang X."/>
            <person name="Bhardwaj S.R."/>
            <person name="Ji J."/>
            <person name="Rong Y.S."/>
        </authorList>
    </citation>
    <scope>FUNCTION</scope>
    <scope>INTERACTION WITH VER AND TEA</scope>
    <scope>MUTAGENESIS OF GLY-45 AND LEU-47</scope>
</reference>
<protein>
    <recommendedName>
        <fullName evidence="8">Protein modigliani</fullName>
    </recommendedName>
</protein>
<dbReference type="EMBL" id="AE014297">
    <property type="protein sequence ID" value="ACL83531.1"/>
    <property type="molecule type" value="Genomic_DNA"/>
</dbReference>
<dbReference type="RefSeq" id="NP_001138073.1">
    <property type="nucleotide sequence ID" value="NM_001144601.2"/>
</dbReference>
<dbReference type="ComplexPortal" id="CPX-8944">
    <property type="entry name" value="MTV complex"/>
</dbReference>
<dbReference type="DIP" id="DIP-48711N"/>
<dbReference type="FunCoup" id="B7Z0L8">
    <property type="interactions" value="21"/>
</dbReference>
<dbReference type="IntAct" id="B7Z0L8">
    <property type="interactions" value="2"/>
</dbReference>
<dbReference type="STRING" id="7227.FBpp0289215"/>
<dbReference type="PaxDb" id="7227-FBpp0289215"/>
<dbReference type="EnsemblMetazoa" id="FBtr0299938">
    <property type="protein sequence ID" value="FBpp0289215"/>
    <property type="gene ID" value="FBgn0261019"/>
</dbReference>
<dbReference type="GeneID" id="7354473"/>
<dbReference type="KEGG" id="dme:Dmel_CG42350"/>
<dbReference type="AGR" id="FB:FBgn0261019"/>
<dbReference type="CTD" id="7354473"/>
<dbReference type="FlyBase" id="FBgn0261019">
    <property type="gene designation" value="moi"/>
</dbReference>
<dbReference type="VEuPathDB" id="VectorBase:FBgn0261019"/>
<dbReference type="eggNOG" id="ENOG502TCSX">
    <property type="taxonomic scope" value="Eukaryota"/>
</dbReference>
<dbReference type="HOGENOM" id="CLU_1505002_0_0_1"/>
<dbReference type="InParanoid" id="B7Z0L8"/>
<dbReference type="OMA" id="IHYGKCA"/>
<dbReference type="OrthoDB" id="8054762at2759"/>
<dbReference type="PhylomeDB" id="B7Z0L8"/>
<dbReference type="BioGRID-ORCS" id="7354473">
    <property type="hits" value="0 hits in 1 CRISPR screen"/>
</dbReference>
<dbReference type="GenomeRNAi" id="7354473"/>
<dbReference type="Proteomes" id="UP000000803">
    <property type="component" value="Chromosome 3R"/>
</dbReference>
<dbReference type="Bgee" id="FBgn0261019">
    <property type="expression patterns" value="Expressed in mushroom body primordium (Drosophila) and 8 other cell types or tissues"/>
</dbReference>
<dbReference type="GO" id="GO:0000781">
    <property type="term" value="C:chromosome, telomeric region"/>
    <property type="evidence" value="ECO:0000314"/>
    <property type="project" value="FlyBase"/>
</dbReference>
<dbReference type="GO" id="GO:0005634">
    <property type="term" value="C:nucleus"/>
    <property type="evidence" value="ECO:0007669"/>
    <property type="project" value="UniProtKB-SubCell"/>
</dbReference>
<dbReference type="GO" id="GO:0005705">
    <property type="term" value="C:polytene chromosome interband"/>
    <property type="evidence" value="ECO:0000314"/>
    <property type="project" value="FlyBase"/>
</dbReference>
<dbReference type="GO" id="GO:0000782">
    <property type="term" value="C:telomere cap complex"/>
    <property type="evidence" value="ECO:0000314"/>
    <property type="project" value="FlyBase"/>
</dbReference>
<dbReference type="GO" id="GO:0031848">
    <property type="term" value="P:protection from non-homologous end joining at telomere"/>
    <property type="evidence" value="ECO:0000315"/>
    <property type="project" value="FlyBase"/>
</dbReference>
<dbReference type="GO" id="GO:0016233">
    <property type="term" value="P:telomere capping"/>
    <property type="evidence" value="ECO:0000315"/>
    <property type="project" value="FlyBase"/>
</dbReference>
<gene>
    <name evidence="13" type="primary">moi</name>
    <name evidence="9" type="synonym">DTL</name>
    <name evidence="7" type="synonym">DTLu</name>
    <name evidence="7" type="ORF">CG31241</name>
    <name evidence="13" type="ORF">CG42350</name>
</gene>
<evidence type="ECO:0000269" key="1">
    <source>
    </source>
</evidence>
<evidence type="ECO:0000269" key="2">
    <source>
    </source>
</evidence>
<evidence type="ECO:0000269" key="3">
    <source>
    </source>
</evidence>
<evidence type="ECO:0000269" key="4">
    <source>
    </source>
</evidence>
<evidence type="ECO:0000269" key="5">
    <source>
    </source>
</evidence>
<evidence type="ECO:0000269" key="6">
    <source>
    </source>
</evidence>
<evidence type="ECO:0000303" key="7">
    <source>
    </source>
</evidence>
<evidence type="ECO:0000303" key="8">
    <source>
    </source>
</evidence>
<evidence type="ECO:0000303" key="9">
    <source>
    </source>
</evidence>
<evidence type="ECO:0000305" key="10"/>
<evidence type="ECO:0000305" key="11">
    <source>
    </source>
</evidence>
<evidence type="ECO:0000305" key="12">
    <source>
    </source>
</evidence>
<evidence type="ECO:0000312" key="13">
    <source>
        <dbReference type="FlyBase" id="FBgn0261019"/>
    </source>
</evidence>
<evidence type="ECO:0000312" key="14">
    <source>
        <dbReference type="Proteomes" id="UP000000803"/>
    </source>
</evidence>
<name>MODI_DROME</name>
<organism evidence="14">
    <name type="scientific">Drosophila melanogaster</name>
    <name type="common">Fruit fly</name>
    <dbReference type="NCBI Taxonomy" id="7227"/>
    <lineage>
        <taxon>Eukaryota</taxon>
        <taxon>Metazoa</taxon>
        <taxon>Ecdysozoa</taxon>
        <taxon>Arthropoda</taxon>
        <taxon>Hexapoda</taxon>
        <taxon>Insecta</taxon>
        <taxon>Pterygota</taxon>
        <taxon>Neoptera</taxon>
        <taxon>Endopterygota</taxon>
        <taxon>Diptera</taxon>
        <taxon>Brachycera</taxon>
        <taxon>Muscomorpha</taxon>
        <taxon>Ephydroidea</taxon>
        <taxon>Drosophilidae</taxon>
        <taxon>Drosophila</taxon>
        <taxon>Sophophora</taxon>
    </lineage>
</organism>
<accession>B7Z0L8</accession>
<keyword id="KW-0158">Chromosome</keyword>
<keyword id="KW-0539">Nucleus</keyword>
<keyword id="KW-1185">Reference proteome</keyword>
<keyword id="KW-0779">Telomere</keyword>
<proteinExistence type="evidence at protein level"/>
<sequence>MSLVPEASTSRAPKYCYFFKTLLVEELELETSYHNLHYGQCALIGRLAFKANQYRLENVRVKCLPKKYSLGEGTVSLLILGLTHDKVVENRVSTGRYCIVRGEVVLHNVQHPKGAKLTAGGVYDKINSLSNDPLAQKQYLSALLATYRPAIDLWYIQVIDRAEDLLTRRLEMRSLIEK</sequence>
<comment type="function">
    <text evidence="3 6">Part of the MTV complex that associates with the HipHop-HOAP complex to form the terminin telomere-capping complex involved in telomere maintenance and prevention of telomere fusion (PubMed:19240120, PubMed:27835648). Potentially functions downstream of mei-41/ATR (PubMed:19240120). As part of the MTV complex binds single stranded DNA in a sequence-independent manner, protecting it from degradation (PubMed:27835648).</text>
</comment>
<comment type="subunit">
    <text evidence="1 2 4 5 6">Probably homodimerizes (PubMed:15684427). Component of the MTV complex, composed of moi/modigliani, tea and ver/verrocchio (PubMed:27835648). Interacts with ver/verrochio and tea (via C-terminus); the interactions are direct and require fully intact moi/modigliani and ver/verrocchio (PubMed:20679394, PubMed:27835648). The MTV complex is recruited to telomeres by the HipHop-HOAP complex, consisting of HipHop, cav/HOAP and Su(var)205/HP1 to form the terminin telomere-capping complex (PubMed:19181850, PubMed:20679394, PubMed:27835648). Interacts with cav/HOAP and Su(var)205/HP1; the interactions are direct (PubMed:19181850). Probably interacts with peo (via N-terminus and UBC domain) (PubMed:26110638).</text>
</comment>
<comment type="interaction">
    <interactant intactId="EBI-15755079">
        <id>B7Z0L8</id>
    </interactant>
    <interactant intactId="EBI-104820">
        <id>Q95RV2</id>
        <label>cav</label>
    </interactant>
    <organismsDiffer>false</organismsDiffer>
    <experiments>2</experiments>
</comment>
<comment type="interaction">
    <interactant intactId="EBI-15755079">
        <id>B7Z0L8</id>
    </interactant>
    <interactant intactId="EBI-155532">
        <id>P05205</id>
        <label>Su(var)205</label>
    </interactant>
    <organismsDiffer>false</organismsDiffer>
    <experiments>3</experiments>
</comment>
<comment type="subcellular location">
    <subcellularLocation>
        <location evidence="2 3 4 5">Nucleus</location>
    </subcellularLocation>
    <subcellularLocation>
        <location evidence="2 3 4 5">Chromosome</location>
    </subcellularLocation>
    <subcellularLocation>
        <location evidence="2 3 4 5">Chromosome</location>
        <location evidence="2 3 4 5">Telomere</location>
    </subcellularLocation>
    <text evidence="2 3 5">Localizes to euchromatic telomeres of polytene chromosomes (PubMed:26110638). Telomere localization is not dependent on peo/pendolino (PubMed:26110638). localizes to specific interband regions on chromosomes (PubMed:19240120). Localization to telomeres is dependent on ver/verrocchio and telomere associated cav/HOAP (PubMed:19181850).</text>
</comment>
<comment type="developmental stage">
    <text evidence="1">Expressed at all stages of development.</text>
</comment>
<comment type="disruption phenotype">
    <text evidence="1 2 3">Lethal between early pupal and early adult stages (PubMed:15684427, PubMed:19181850, PubMed:19240120). Frequent telomeric fusions in larval neruoblasts (PubMed:19181850, PubMed:19240120).</text>
</comment>
<comment type="miscellaneous">
    <text evidence="12">Multiple telomeric fusions result in multicentric linear chromosomes that resemble little trains of chromosomes, hence the name 'modigliani', the name of an Italian train named after the artist.</text>
</comment>
<comment type="caution">
    <text evidence="1 10 11">The naming of this protein has been complicated due to being expressed from a bicistronic mRNA. The upstream ORF (uORF) encodes moi/modigliani while the downstream ORF (dORF) encodes Tgs1 (PubMed:15684427). The gene was originally named Drosophila tat-like (DTL) for the RNA-binding activity of Tgs1, and the respective ORF products have been referred to as DTLu and DTLd. The ORF identifier CG31241 was originally assigned to the gene encompassing both products, which have since been given separate ORF identifiers (CG42350 for moi/modigliani and CG44890 for Tgs1).</text>
</comment>
<feature type="chain" id="PRO_0000460346" description="Protein modigliani">
    <location>
        <begin position="1"/>
        <end position="178"/>
    </location>
</feature>
<feature type="mutagenesis site" description="Disrupts interaction with ver/verrocchio. Unable to rescue null mutant phenotype." evidence="6">
    <original>G</original>
    <variation>R</variation>
    <location>
        <position position="45"/>
    </location>
</feature>
<feature type="mutagenesis site" description="Disrupts interaction with ver/verrocchio. Partially rescues null mutant phenotype." evidence="6">
    <original>L</original>
    <variation>Q</variation>
    <location>
        <position position="47"/>
    </location>
</feature>